<dbReference type="EC" id="2.5.1.n9" evidence="1"/>
<dbReference type="EMBL" id="CP000736">
    <property type="protein sequence ID" value="ABR52829.1"/>
    <property type="molecule type" value="Genomic_DNA"/>
</dbReference>
<dbReference type="SMR" id="A6U311"/>
<dbReference type="KEGG" id="sah:SaurJH1_1995"/>
<dbReference type="HOGENOM" id="CLU_095211_0_0_9"/>
<dbReference type="UniPathway" id="UPA00940"/>
<dbReference type="GO" id="GO:0120536">
    <property type="term" value="F:heptaprenylglyceryl phosphate synthase activity"/>
    <property type="evidence" value="ECO:0007669"/>
    <property type="project" value="RHEA"/>
</dbReference>
<dbReference type="GO" id="GO:0000287">
    <property type="term" value="F:magnesium ion binding"/>
    <property type="evidence" value="ECO:0007669"/>
    <property type="project" value="UniProtKB-UniRule"/>
</dbReference>
<dbReference type="GO" id="GO:0046474">
    <property type="term" value="P:glycerophospholipid biosynthetic process"/>
    <property type="evidence" value="ECO:0007669"/>
    <property type="project" value="UniProtKB-UniRule"/>
</dbReference>
<dbReference type="CDD" id="cd02812">
    <property type="entry name" value="PcrB_like"/>
    <property type="match status" value="1"/>
</dbReference>
<dbReference type="FunFam" id="3.20.20.390:FF:000001">
    <property type="entry name" value="Heptaprenylglyceryl phosphate synthase"/>
    <property type="match status" value="1"/>
</dbReference>
<dbReference type="Gene3D" id="3.20.20.390">
    <property type="entry name" value="FMN-linked oxidoreductases"/>
    <property type="match status" value="1"/>
</dbReference>
<dbReference type="HAMAP" id="MF_00112">
    <property type="entry name" value="GGGP_HepGP_synthase"/>
    <property type="match status" value="1"/>
</dbReference>
<dbReference type="InterPro" id="IPR039074">
    <property type="entry name" value="GGGP/HepGP_synthase_I"/>
</dbReference>
<dbReference type="InterPro" id="IPR038597">
    <property type="entry name" value="GGGP/HepGP_synthase_sf"/>
</dbReference>
<dbReference type="InterPro" id="IPR008205">
    <property type="entry name" value="GGGP_HepGP_synthase"/>
</dbReference>
<dbReference type="NCBIfam" id="TIGR01768">
    <property type="entry name" value="GGGP-family"/>
    <property type="match status" value="1"/>
</dbReference>
<dbReference type="NCBIfam" id="NF003197">
    <property type="entry name" value="PRK04169.1-1"/>
    <property type="match status" value="1"/>
</dbReference>
<dbReference type="NCBIfam" id="NF003199">
    <property type="entry name" value="PRK04169.1-3"/>
    <property type="match status" value="1"/>
</dbReference>
<dbReference type="NCBIfam" id="NF003200">
    <property type="entry name" value="PRK04169.1-4"/>
    <property type="match status" value="1"/>
</dbReference>
<dbReference type="PANTHER" id="PTHR40029">
    <property type="match status" value="1"/>
</dbReference>
<dbReference type="PANTHER" id="PTHR40029:SF2">
    <property type="entry name" value="HEPTAPRENYLGLYCERYL PHOSPHATE SYNTHASE"/>
    <property type="match status" value="1"/>
</dbReference>
<dbReference type="Pfam" id="PF01884">
    <property type="entry name" value="PcrB"/>
    <property type="match status" value="1"/>
</dbReference>
<dbReference type="SUPFAM" id="SSF51395">
    <property type="entry name" value="FMN-linked oxidoreductases"/>
    <property type="match status" value="1"/>
</dbReference>
<protein>
    <recommendedName>
        <fullName evidence="1">Heptaprenylglyceryl phosphate synthase</fullName>
        <shortName evidence="1">HepGP synthase</shortName>
        <ecNumber evidence="1">2.5.1.n9</ecNumber>
    </recommendedName>
    <alternativeName>
        <fullName evidence="1">Glycerol-1-phosphate heptaprenyltransferase</fullName>
    </alternativeName>
</protein>
<keyword id="KW-0444">Lipid biosynthesis</keyword>
<keyword id="KW-0443">Lipid metabolism</keyword>
<keyword id="KW-0460">Magnesium</keyword>
<keyword id="KW-0479">Metal-binding</keyword>
<keyword id="KW-0594">Phospholipid biosynthesis</keyword>
<keyword id="KW-1208">Phospholipid metabolism</keyword>
<keyword id="KW-0808">Transferase</keyword>
<gene>
    <name evidence="1" type="primary">pcrB</name>
    <name type="ordered locus">SaurJH1_1995</name>
</gene>
<accession>A6U311</accession>
<comment type="function">
    <text evidence="1">Prenyltransferase that catalyzes in vivo the transfer of the heptaprenyl moiety of heptaprenyl pyrophosphate (HepPP; 35 carbon atoms) to the C3 hydroxyl of sn-glycerol-1-phosphate (G1P), producing heptaprenylglyceryl phosphate (HepGP). This reaction is an ether-bond-formation step in the biosynthesis of archaea-type G1P-based membrane lipids found in Bacillales.</text>
</comment>
<comment type="catalytic activity">
    <reaction evidence="1">
        <text>sn-glycerol 1-phosphate + all-trans-heptaprenyl diphosphate = 3-heptaprenyl-sn-glycero-1-phosphate + diphosphate</text>
        <dbReference type="Rhea" id="RHEA:33495"/>
        <dbReference type="ChEBI" id="CHEBI:33019"/>
        <dbReference type="ChEBI" id="CHEBI:57685"/>
        <dbReference type="ChEBI" id="CHEBI:58206"/>
        <dbReference type="ChEBI" id="CHEBI:64781"/>
        <dbReference type="EC" id="2.5.1.n9"/>
    </reaction>
</comment>
<comment type="cofactor">
    <cofactor evidence="1">
        <name>Mg(2+)</name>
        <dbReference type="ChEBI" id="CHEBI:18420"/>
    </cofactor>
</comment>
<comment type="pathway">
    <text evidence="1">Membrane lipid metabolism; glycerophospholipid metabolism.</text>
</comment>
<comment type="subunit">
    <text evidence="1">Homodimer.</text>
</comment>
<comment type="similarity">
    <text evidence="1">Belongs to the GGGP/HepGP synthase family. Group I subfamily.</text>
</comment>
<evidence type="ECO:0000255" key="1">
    <source>
        <dbReference type="HAMAP-Rule" id="MF_00112"/>
    </source>
</evidence>
<proteinExistence type="inferred from homology"/>
<sequence length="230" mass="25875">MYDIKKWRHIFKLDPAKHISDDDLDAICMSQTDAIMIGGTDDVTEDNVIHLMSRIRRYPLPLVLEISNIESVMPGFDFYFVPTVLNSTDVAFHNGTLLEALKTYGHSIDFEEVIFEGYVVCNADSKVAKHTKANTDLTTEDLEAYAQMVNHMYRLPVMYIEYSGIYGDVSKVQAVSEHLTETQLFYGGGISSEQQATEMAAIADTIIVGDIIYKDIKKALKTVKIKESSK</sequence>
<reference key="1">
    <citation type="submission" date="2007-06" db="EMBL/GenBank/DDBJ databases">
        <title>Complete sequence of chromosome of Staphylococcus aureus subsp. aureus JH1.</title>
        <authorList>
            <consortium name="US DOE Joint Genome Institute"/>
            <person name="Copeland A."/>
            <person name="Lucas S."/>
            <person name="Lapidus A."/>
            <person name="Barry K."/>
            <person name="Detter J.C."/>
            <person name="Glavina del Rio T."/>
            <person name="Hammon N."/>
            <person name="Israni S."/>
            <person name="Dalin E."/>
            <person name="Tice H."/>
            <person name="Pitluck S."/>
            <person name="Chain P."/>
            <person name="Malfatti S."/>
            <person name="Shin M."/>
            <person name="Vergez L."/>
            <person name="Schmutz J."/>
            <person name="Larimer F."/>
            <person name="Land M."/>
            <person name="Hauser L."/>
            <person name="Kyrpides N."/>
            <person name="Ivanova N."/>
            <person name="Tomasz A."/>
            <person name="Richardson P."/>
        </authorList>
    </citation>
    <scope>NUCLEOTIDE SEQUENCE [LARGE SCALE GENOMIC DNA]</scope>
    <source>
        <strain>JH1</strain>
    </source>
</reference>
<organism>
    <name type="scientific">Staphylococcus aureus (strain JH1)</name>
    <dbReference type="NCBI Taxonomy" id="359787"/>
    <lineage>
        <taxon>Bacteria</taxon>
        <taxon>Bacillati</taxon>
        <taxon>Bacillota</taxon>
        <taxon>Bacilli</taxon>
        <taxon>Bacillales</taxon>
        <taxon>Staphylococcaceae</taxon>
        <taxon>Staphylococcus</taxon>
    </lineage>
</organism>
<name>PCRB_STAA2</name>
<feature type="chain" id="PRO_1000075988" description="Heptaprenylglyceryl phosphate synthase">
    <location>
        <begin position="1"/>
        <end position="230"/>
    </location>
</feature>
<feature type="binding site" evidence="1">
    <location>
        <position position="12"/>
    </location>
    <ligand>
        <name>sn-glycerol 1-phosphate</name>
        <dbReference type="ChEBI" id="CHEBI:57685"/>
    </ligand>
</feature>
<feature type="binding site" evidence="1">
    <location>
        <position position="14"/>
    </location>
    <ligand>
        <name>Mg(2+)</name>
        <dbReference type="ChEBI" id="CHEBI:18420"/>
    </ligand>
</feature>
<feature type="binding site" evidence="1">
    <location>
        <position position="40"/>
    </location>
    <ligand>
        <name>Mg(2+)</name>
        <dbReference type="ChEBI" id="CHEBI:18420"/>
    </ligand>
</feature>
<feature type="binding site" evidence="1">
    <location>
        <begin position="159"/>
        <end position="164"/>
    </location>
    <ligand>
        <name>sn-glycerol 1-phosphate</name>
        <dbReference type="ChEBI" id="CHEBI:57685"/>
    </ligand>
</feature>
<feature type="binding site" evidence="1">
    <location>
        <position position="189"/>
    </location>
    <ligand>
        <name>sn-glycerol 1-phosphate</name>
        <dbReference type="ChEBI" id="CHEBI:57685"/>
    </ligand>
</feature>
<feature type="binding site" evidence="1">
    <location>
        <begin position="209"/>
        <end position="210"/>
    </location>
    <ligand>
        <name>sn-glycerol 1-phosphate</name>
        <dbReference type="ChEBI" id="CHEBI:57685"/>
    </ligand>
</feature>